<organism>
    <name type="scientific">Flavobacterium johnsoniae (strain ATCC 17061 / DSM 2064 / JCM 8514 / BCRC 14874 / CCUG 350202 / NBRC 14942 / NCIMB 11054 / UW101)</name>
    <name type="common">Cytophaga johnsonae</name>
    <dbReference type="NCBI Taxonomy" id="376686"/>
    <lineage>
        <taxon>Bacteria</taxon>
        <taxon>Pseudomonadati</taxon>
        <taxon>Bacteroidota</taxon>
        <taxon>Flavobacteriia</taxon>
        <taxon>Flavobacteriales</taxon>
        <taxon>Flavobacteriaceae</taxon>
        <taxon>Flavobacterium</taxon>
    </lineage>
</organism>
<sequence>MKYLITIVGPTAIGKTALSIALAQHFKCEIVSCDSRQFFKEMTIGTAVPSQEELNSAKHHFIQNKSIFENYTVGDYEKEALAKIEELFEANDFVILIGGSGLYVDAILKGFDEFPEIDPNVRAEVNTNYEKLGIEYLQEQLKNLDPEYYQKITLENPQTLQNPQRMMRFVEVCIGSQKPYSSFLNLKKNNRNFTPILIGLDADREIIYSRINQRVDIMMNEGLLKEAETLYPNKALNALQTVGYRELFSYFDGDFTLPFAIEEIKKNTRRFSKRQLTWFKRNENTKWFDYSTDRNEIIHYIVENLKSSI</sequence>
<proteinExistence type="inferred from homology"/>
<gene>
    <name evidence="1" type="primary">miaA</name>
    <name type="ordered locus">Fjoh_3453</name>
</gene>
<feature type="chain" id="PRO_0000377162" description="tRNA dimethylallyltransferase">
    <location>
        <begin position="1"/>
        <end position="309"/>
    </location>
</feature>
<feature type="region of interest" description="Interaction with substrate tRNA" evidence="1">
    <location>
        <begin position="34"/>
        <end position="37"/>
    </location>
</feature>
<feature type="region of interest" description="Interaction with substrate tRNA" evidence="1">
    <location>
        <begin position="164"/>
        <end position="168"/>
    </location>
</feature>
<feature type="binding site" evidence="1">
    <location>
        <begin position="9"/>
        <end position="16"/>
    </location>
    <ligand>
        <name>ATP</name>
        <dbReference type="ChEBI" id="CHEBI:30616"/>
    </ligand>
</feature>
<feature type="binding site" evidence="1">
    <location>
        <begin position="11"/>
        <end position="16"/>
    </location>
    <ligand>
        <name>substrate</name>
    </ligand>
</feature>
<feature type="site" description="Interaction with substrate tRNA" evidence="1">
    <location>
        <position position="100"/>
    </location>
</feature>
<feature type="site" description="Interaction with substrate tRNA" evidence="1">
    <location>
        <position position="122"/>
    </location>
</feature>
<reference key="1">
    <citation type="journal article" date="2009" name="Appl. Environ. Microbiol.">
        <title>Novel features of the polysaccharide-digesting gliding bacterium Flavobacterium johnsoniae as revealed by genome sequence analysis.</title>
        <authorList>
            <person name="McBride M.J."/>
            <person name="Xie G."/>
            <person name="Martens E.C."/>
            <person name="Lapidus A."/>
            <person name="Henrissat B."/>
            <person name="Rhodes R.G."/>
            <person name="Goltsman E."/>
            <person name="Wang W."/>
            <person name="Xu J."/>
            <person name="Hunnicutt D.W."/>
            <person name="Staroscik A.M."/>
            <person name="Hoover T.R."/>
            <person name="Cheng Y.Q."/>
            <person name="Stein J.L."/>
        </authorList>
    </citation>
    <scope>NUCLEOTIDE SEQUENCE [LARGE SCALE GENOMIC DNA]</scope>
    <source>
        <strain>ATCC 17061 / DSM 2064 / JCM 8514 / BCRC 14874 / CCUG 350202 / NBRC 14942 / NCIMB 11054 / UW101</strain>
    </source>
</reference>
<dbReference type="EC" id="2.5.1.75" evidence="1"/>
<dbReference type="EMBL" id="CP000685">
    <property type="protein sequence ID" value="ABQ06467.1"/>
    <property type="molecule type" value="Genomic_DNA"/>
</dbReference>
<dbReference type="RefSeq" id="WP_012025436.1">
    <property type="nucleotide sequence ID" value="NC_009441.1"/>
</dbReference>
<dbReference type="SMR" id="A5FE96"/>
<dbReference type="STRING" id="376686.Fjoh_3453"/>
<dbReference type="KEGG" id="fjo:Fjoh_3453"/>
<dbReference type="eggNOG" id="COG0324">
    <property type="taxonomic scope" value="Bacteria"/>
</dbReference>
<dbReference type="HOGENOM" id="CLU_032616_0_1_10"/>
<dbReference type="OrthoDB" id="9776390at2"/>
<dbReference type="Proteomes" id="UP000006694">
    <property type="component" value="Chromosome"/>
</dbReference>
<dbReference type="GO" id="GO:0005524">
    <property type="term" value="F:ATP binding"/>
    <property type="evidence" value="ECO:0007669"/>
    <property type="project" value="UniProtKB-UniRule"/>
</dbReference>
<dbReference type="GO" id="GO:0052381">
    <property type="term" value="F:tRNA dimethylallyltransferase activity"/>
    <property type="evidence" value="ECO:0007669"/>
    <property type="project" value="UniProtKB-UniRule"/>
</dbReference>
<dbReference type="GO" id="GO:0006400">
    <property type="term" value="P:tRNA modification"/>
    <property type="evidence" value="ECO:0007669"/>
    <property type="project" value="TreeGrafter"/>
</dbReference>
<dbReference type="Gene3D" id="1.10.20.140">
    <property type="match status" value="1"/>
</dbReference>
<dbReference type="Gene3D" id="3.40.50.300">
    <property type="entry name" value="P-loop containing nucleotide triphosphate hydrolases"/>
    <property type="match status" value="1"/>
</dbReference>
<dbReference type="HAMAP" id="MF_00185">
    <property type="entry name" value="IPP_trans"/>
    <property type="match status" value="1"/>
</dbReference>
<dbReference type="InterPro" id="IPR039657">
    <property type="entry name" value="Dimethylallyltransferase"/>
</dbReference>
<dbReference type="InterPro" id="IPR018022">
    <property type="entry name" value="IPT"/>
</dbReference>
<dbReference type="InterPro" id="IPR027417">
    <property type="entry name" value="P-loop_NTPase"/>
</dbReference>
<dbReference type="NCBIfam" id="TIGR00174">
    <property type="entry name" value="miaA"/>
    <property type="match status" value="1"/>
</dbReference>
<dbReference type="PANTHER" id="PTHR11088">
    <property type="entry name" value="TRNA DIMETHYLALLYLTRANSFERASE"/>
    <property type="match status" value="1"/>
</dbReference>
<dbReference type="PANTHER" id="PTHR11088:SF60">
    <property type="entry name" value="TRNA DIMETHYLALLYLTRANSFERASE"/>
    <property type="match status" value="1"/>
</dbReference>
<dbReference type="Pfam" id="PF01715">
    <property type="entry name" value="IPPT"/>
    <property type="match status" value="1"/>
</dbReference>
<dbReference type="SUPFAM" id="SSF52540">
    <property type="entry name" value="P-loop containing nucleoside triphosphate hydrolases"/>
    <property type="match status" value="2"/>
</dbReference>
<accession>A5FE96</accession>
<keyword id="KW-0067">ATP-binding</keyword>
<keyword id="KW-0460">Magnesium</keyword>
<keyword id="KW-0547">Nucleotide-binding</keyword>
<keyword id="KW-0808">Transferase</keyword>
<keyword id="KW-0819">tRNA processing</keyword>
<evidence type="ECO:0000255" key="1">
    <source>
        <dbReference type="HAMAP-Rule" id="MF_00185"/>
    </source>
</evidence>
<comment type="function">
    <text evidence="1">Catalyzes the transfer of a dimethylallyl group onto the adenine at position 37 in tRNAs that read codons beginning with uridine, leading to the formation of N6-(dimethylallyl)adenosine (i(6)A).</text>
</comment>
<comment type="catalytic activity">
    <reaction evidence="1">
        <text>adenosine(37) in tRNA + dimethylallyl diphosphate = N(6)-dimethylallyladenosine(37) in tRNA + diphosphate</text>
        <dbReference type="Rhea" id="RHEA:26482"/>
        <dbReference type="Rhea" id="RHEA-COMP:10162"/>
        <dbReference type="Rhea" id="RHEA-COMP:10375"/>
        <dbReference type="ChEBI" id="CHEBI:33019"/>
        <dbReference type="ChEBI" id="CHEBI:57623"/>
        <dbReference type="ChEBI" id="CHEBI:74411"/>
        <dbReference type="ChEBI" id="CHEBI:74415"/>
        <dbReference type="EC" id="2.5.1.75"/>
    </reaction>
</comment>
<comment type="cofactor">
    <cofactor evidence="1">
        <name>Mg(2+)</name>
        <dbReference type="ChEBI" id="CHEBI:18420"/>
    </cofactor>
</comment>
<comment type="subunit">
    <text evidence="1">Monomer.</text>
</comment>
<comment type="similarity">
    <text evidence="1">Belongs to the IPP transferase family.</text>
</comment>
<name>MIAA_FLAJ1</name>
<protein>
    <recommendedName>
        <fullName evidence="1">tRNA dimethylallyltransferase</fullName>
        <ecNumber evidence="1">2.5.1.75</ecNumber>
    </recommendedName>
    <alternativeName>
        <fullName evidence="1">Dimethylallyl diphosphate:tRNA dimethylallyltransferase</fullName>
        <shortName evidence="1">DMAPP:tRNA dimethylallyltransferase</shortName>
        <shortName evidence="1">DMATase</shortName>
    </alternativeName>
    <alternativeName>
        <fullName evidence="1">Isopentenyl-diphosphate:tRNA isopentenyltransferase</fullName>
        <shortName evidence="1">IPP transferase</shortName>
        <shortName evidence="1">IPPT</shortName>
        <shortName evidence="1">IPTase</shortName>
    </alternativeName>
</protein>